<reference key="1">
    <citation type="journal article" date="2009" name="Nature">
        <title>The Sorghum bicolor genome and the diversification of grasses.</title>
        <authorList>
            <person name="Paterson A.H."/>
            <person name="Bowers J.E."/>
            <person name="Bruggmann R."/>
            <person name="Dubchak I."/>
            <person name="Grimwood J."/>
            <person name="Gundlach H."/>
            <person name="Haberer G."/>
            <person name="Hellsten U."/>
            <person name="Mitros T."/>
            <person name="Poliakov A."/>
            <person name="Schmutz J."/>
            <person name="Spannagl M."/>
            <person name="Tang H."/>
            <person name="Wang X."/>
            <person name="Wicker T."/>
            <person name="Bharti A.K."/>
            <person name="Chapman J."/>
            <person name="Feltus F.A."/>
            <person name="Gowik U."/>
            <person name="Grigoriev I.V."/>
            <person name="Lyons E."/>
            <person name="Maher C.A."/>
            <person name="Martis M."/>
            <person name="Narechania A."/>
            <person name="Otillar R.P."/>
            <person name="Penning B.W."/>
            <person name="Salamov A.A."/>
            <person name="Wang Y."/>
            <person name="Zhang L."/>
            <person name="Carpita N.C."/>
            <person name="Freeling M."/>
            <person name="Gingle A.R."/>
            <person name="Hash C.T."/>
            <person name="Keller B."/>
            <person name="Klein P."/>
            <person name="Kresovich S."/>
            <person name="McCann M.C."/>
            <person name="Ming R."/>
            <person name="Peterson D.G."/>
            <person name="Mehboob-ur-Rahman M."/>
            <person name="Ware D."/>
            <person name="Westhoff P."/>
            <person name="Mayer K.F.X."/>
            <person name="Messing J."/>
            <person name="Rokhsar D.S."/>
        </authorList>
    </citation>
    <scope>NUCLEOTIDE SEQUENCE [LARGE SCALE GENOMIC DNA]</scope>
    <source>
        <strain>cv. BTx623</strain>
    </source>
</reference>
<reference key="2">
    <citation type="journal article" date="2018" name="Plant J.">
        <title>The Sorghum bicolor reference genome: improved assembly, gene annotations, a transcriptome atlas, and signatures of genome organization.</title>
        <authorList>
            <person name="McCormick R.F."/>
            <person name="Truong S.K."/>
            <person name="Sreedasyam A."/>
            <person name="Jenkins J."/>
            <person name="Shu S."/>
            <person name="Sims D."/>
            <person name="Kennedy M."/>
            <person name="Amirebrahimi M."/>
            <person name="Weers B.D."/>
            <person name="McKinley B."/>
            <person name="Mattison A."/>
            <person name="Morishige D.T."/>
            <person name="Grimwood J."/>
            <person name="Schmutz J."/>
            <person name="Mullet J.E."/>
        </authorList>
    </citation>
    <scope>GENOME REANNOTATION</scope>
    <source>
        <strain>cv. BTx623</strain>
    </source>
</reference>
<reference key="3">
    <citation type="journal article" date="2014" name="Plant Physiol.">
        <title>Functional and evolutionary analysis of the CASPARIAN STRIP MEMBRANE DOMAIN PROTEIN family.</title>
        <authorList>
            <person name="Roppolo D."/>
            <person name="Boeckmann B."/>
            <person name="Pfister A."/>
            <person name="Boutet E."/>
            <person name="Rubio M.C."/>
            <person name="Denervaud-Tendon V."/>
            <person name="Vermeer J.E."/>
            <person name="Gheyselinck J."/>
            <person name="Xenarios I."/>
            <person name="Geldner N."/>
        </authorList>
    </citation>
    <scope>GENE FAMILY</scope>
    <scope>NOMENCLATURE</scope>
</reference>
<feature type="chain" id="PRO_0000391571" description="Casparian strip membrane protein 4">
    <location>
        <begin position="1"/>
        <end position="192"/>
    </location>
</feature>
<feature type="topological domain" description="Cytoplasmic" evidence="2">
    <location>
        <begin position="1"/>
        <end position="29"/>
    </location>
</feature>
<feature type="transmembrane region" description="Helical" evidence="2">
    <location>
        <begin position="30"/>
        <end position="50"/>
    </location>
</feature>
<feature type="topological domain" description="Extracellular" evidence="2">
    <location>
        <begin position="51"/>
        <end position="79"/>
    </location>
</feature>
<feature type="transmembrane region" description="Helical" evidence="2">
    <location>
        <begin position="80"/>
        <end position="100"/>
    </location>
</feature>
<feature type="topological domain" description="Cytoplasmic" evidence="2">
    <location>
        <begin position="101"/>
        <end position="112"/>
    </location>
</feature>
<feature type="transmembrane region" description="Helical" evidence="2">
    <location>
        <begin position="113"/>
        <end position="133"/>
    </location>
</feature>
<feature type="topological domain" description="Extracellular" evidence="2">
    <location>
        <begin position="134"/>
        <end position="166"/>
    </location>
</feature>
<feature type="transmembrane region" description="Helical" evidence="2">
    <location>
        <begin position="167"/>
        <end position="187"/>
    </location>
</feature>
<feature type="topological domain" description="Cytoplasmic" evidence="2">
    <location>
        <begin position="188"/>
        <end position="192"/>
    </location>
</feature>
<feature type="glycosylation site" description="N-linked (GlcNAc...) asparagine" evidence="2">
    <location>
        <position position="56"/>
    </location>
</feature>
<dbReference type="EMBL" id="CM000765">
    <property type="protein sequence ID" value="EES10944.1"/>
    <property type="molecule type" value="Genomic_DNA"/>
</dbReference>
<dbReference type="SMR" id="C5Y9U6"/>
<dbReference type="FunCoup" id="C5Y9U6">
    <property type="interactions" value="1035"/>
</dbReference>
<dbReference type="STRING" id="4558.C5Y9U6"/>
<dbReference type="EnsemblPlants" id="EES10944">
    <property type="protein sequence ID" value="EES10944"/>
    <property type="gene ID" value="SORBI_3006G106900"/>
</dbReference>
<dbReference type="Gramene" id="EES10944">
    <property type="protein sequence ID" value="EES10944"/>
    <property type="gene ID" value="SORBI_3006G106900"/>
</dbReference>
<dbReference type="KEGG" id="sbi:8073432"/>
<dbReference type="eggNOG" id="ENOG502RRQU">
    <property type="taxonomic scope" value="Eukaryota"/>
</dbReference>
<dbReference type="HOGENOM" id="CLU_066104_3_2_1"/>
<dbReference type="InParanoid" id="C5Y9U6"/>
<dbReference type="OMA" id="LSIYHIM"/>
<dbReference type="OrthoDB" id="753675at2759"/>
<dbReference type="Proteomes" id="UP000000768">
    <property type="component" value="Chromosome 6"/>
</dbReference>
<dbReference type="GO" id="GO:0005886">
    <property type="term" value="C:plasma membrane"/>
    <property type="evidence" value="ECO:0007669"/>
    <property type="project" value="UniProtKB-SubCell"/>
</dbReference>
<dbReference type="GO" id="GO:0071555">
    <property type="term" value="P:cell wall organization"/>
    <property type="evidence" value="ECO:0007669"/>
    <property type="project" value="UniProtKB-KW"/>
</dbReference>
<dbReference type="InterPro" id="IPR006459">
    <property type="entry name" value="CASP/CASPL"/>
</dbReference>
<dbReference type="InterPro" id="IPR006702">
    <property type="entry name" value="CASP_dom"/>
</dbReference>
<dbReference type="InterPro" id="IPR044173">
    <property type="entry name" value="CASPL"/>
</dbReference>
<dbReference type="NCBIfam" id="TIGR01569">
    <property type="entry name" value="A_tha_TIGR01569"/>
    <property type="match status" value="1"/>
</dbReference>
<dbReference type="PANTHER" id="PTHR36488:SF12">
    <property type="entry name" value="CASP-LIKE PROTEIN"/>
    <property type="match status" value="1"/>
</dbReference>
<dbReference type="PANTHER" id="PTHR36488">
    <property type="entry name" value="CASP-LIKE PROTEIN 1U1"/>
    <property type="match status" value="1"/>
</dbReference>
<dbReference type="Pfam" id="PF04535">
    <property type="entry name" value="CASP_dom"/>
    <property type="match status" value="1"/>
</dbReference>
<sequence length="192" mass="20736">MTKDVVIEHGESSKAPLVPAPVAAGVGRAVSIADVFLRFLSIVATIASAISMGTTNETLPFFTQFIQFEAKYSDLPSFTFFVAANAVVCTYLVLSIPLSIVHIIRPRARYSRLILVFFDAVMLALLTAGASAAAAIVYLAHKGNVRANWFAICQQFDSFCERISGSLIGSFAAMVLLIVLIFLSAFALARRH</sequence>
<organism>
    <name type="scientific">Sorghum bicolor</name>
    <name type="common">Sorghum</name>
    <name type="synonym">Sorghum vulgare</name>
    <dbReference type="NCBI Taxonomy" id="4558"/>
    <lineage>
        <taxon>Eukaryota</taxon>
        <taxon>Viridiplantae</taxon>
        <taxon>Streptophyta</taxon>
        <taxon>Embryophyta</taxon>
        <taxon>Tracheophyta</taxon>
        <taxon>Spermatophyta</taxon>
        <taxon>Magnoliopsida</taxon>
        <taxon>Liliopsida</taxon>
        <taxon>Poales</taxon>
        <taxon>Poaceae</taxon>
        <taxon>PACMAD clade</taxon>
        <taxon>Panicoideae</taxon>
        <taxon>Andropogonodae</taxon>
        <taxon>Andropogoneae</taxon>
        <taxon>Sorghinae</taxon>
        <taxon>Sorghum</taxon>
    </lineage>
</organism>
<keyword id="KW-1003">Cell membrane</keyword>
<keyword id="KW-0961">Cell wall biogenesis/degradation</keyword>
<keyword id="KW-0325">Glycoprotein</keyword>
<keyword id="KW-0472">Membrane</keyword>
<keyword id="KW-1185">Reference proteome</keyword>
<keyword id="KW-0812">Transmembrane</keyword>
<keyword id="KW-1133">Transmembrane helix</keyword>
<comment type="function">
    <text evidence="1">Regulates membrane-cell wall junctions and localized cell wall deposition. Required for establishment of the Casparian strip membrane domain (CSD) and the subsequent formation of Casparian strips, a cell wall modification of the root endodermis that determines an apoplastic barrier between the intraorganismal apoplasm and the extraorganismal apoplasm and prevents lateral diffusion (By similarity).</text>
</comment>
<comment type="subunit">
    <text evidence="1">Homodimer and heterodimers.</text>
</comment>
<comment type="subcellular location">
    <subcellularLocation>
        <location evidence="1">Cell membrane</location>
        <topology evidence="1">Multi-pass membrane protein</topology>
    </subcellularLocation>
    <text evidence="1">Very restricted localization following a belt shape within the plasma membrane which coincides with the position of the Casparian strip membrane domain in the root endodermis.</text>
</comment>
<comment type="similarity">
    <text evidence="3">Belongs to the Casparian strip membrane proteins (CASP) family.</text>
</comment>
<name>CASP4_SORBI</name>
<evidence type="ECO:0000250" key="1"/>
<evidence type="ECO:0000255" key="2"/>
<evidence type="ECO:0000305" key="3"/>
<gene>
    <name type="ordered locus">Sb06g018970</name>
</gene>
<protein>
    <recommendedName>
        <fullName>Casparian strip membrane protein 4</fullName>
        <shortName>SbCASP4</shortName>
    </recommendedName>
</protein>
<proteinExistence type="evidence at transcript level"/>
<accession>C5Y9U6</accession>